<reference key="1">
    <citation type="journal article" date="1995" name="Mol. Cell. Endocrinol.">
        <title>A novel human cDNA highly homologous to the fish hormone stanniocalcin.</title>
        <authorList>
            <person name="Chang A.C.-M."/>
            <person name="Janosi J."/>
            <person name="Hulsbeek M."/>
            <person name="de Jong D."/>
            <person name="Jeffrey K.J."/>
            <person name="Noble J.R."/>
            <person name="Reddel R.R."/>
        </authorList>
    </citation>
    <scope>NUCLEOTIDE SEQUENCE [MRNA] (ISOFORM 1)</scope>
    <source>
        <tissue>Fibrosarcoma</tissue>
        <tissue>Lung carcinoma</tissue>
    </source>
</reference>
<reference key="2">
    <citation type="journal article" date="1996" name="Proc. Natl. Acad. Sci. U.S.A.">
        <title>Human stanniocalcin: a possible hormonal regulator of mineral metabolism.</title>
        <authorList>
            <person name="Olsen H.S."/>
            <person name="Cepeda M.A."/>
            <person name="Zhang Q.-Q."/>
            <person name="Rosen C.A."/>
            <person name="Vozzolo B.L."/>
            <person name="Wagner G.F."/>
        </authorList>
    </citation>
    <scope>NUCLEOTIDE SEQUENCE [MRNA] (ISOFORM 1)</scope>
    <source>
        <tissue>Fetal lung</tissue>
    </source>
</reference>
<reference key="3">
    <citation type="submission" date="2000-03" db="EMBL/GenBank/DDBJ databases">
        <title>Characterization of the human stanniocalcin 1 gene.</title>
        <authorList>
            <person name="Jeffrey K.J."/>
            <person name="Reddel R.R."/>
        </authorList>
    </citation>
    <scope>NUCLEOTIDE SEQUENCE [GENOMIC DNA]</scope>
</reference>
<reference key="4">
    <citation type="journal article" date="2004" name="Nat. Genet.">
        <title>Complete sequencing and characterization of 21,243 full-length human cDNAs.</title>
        <authorList>
            <person name="Ota T."/>
            <person name="Suzuki Y."/>
            <person name="Nishikawa T."/>
            <person name="Otsuki T."/>
            <person name="Sugiyama T."/>
            <person name="Irie R."/>
            <person name="Wakamatsu A."/>
            <person name="Hayashi K."/>
            <person name="Sato H."/>
            <person name="Nagai K."/>
            <person name="Kimura K."/>
            <person name="Makita H."/>
            <person name="Sekine M."/>
            <person name="Obayashi M."/>
            <person name="Nishi T."/>
            <person name="Shibahara T."/>
            <person name="Tanaka T."/>
            <person name="Ishii S."/>
            <person name="Yamamoto J."/>
            <person name="Saito K."/>
            <person name="Kawai Y."/>
            <person name="Isono Y."/>
            <person name="Nakamura Y."/>
            <person name="Nagahari K."/>
            <person name="Murakami K."/>
            <person name="Yasuda T."/>
            <person name="Iwayanagi T."/>
            <person name="Wagatsuma M."/>
            <person name="Shiratori A."/>
            <person name="Sudo H."/>
            <person name="Hosoiri T."/>
            <person name="Kaku Y."/>
            <person name="Kodaira H."/>
            <person name="Kondo H."/>
            <person name="Sugawara M."/>
            <person name="Takahashi M."/>
            <person name="Kanda K."/>
            <person name="Yokoi T."/>
            <person name="Furuya T."/>
            <person name="Kikkawa E."/>
            <person name="Omura Y."/>
            <person name="Abe K."/>
            <person name="Kamihara K."/>
            <person name="Katsuta N."/>
            <person name="Sato K."/>
            <person name="Tanikawa M."/>
            <person name="Yamazaki M."/>
            <person name="Ninomiya K."/>
            <person name="Ishibashi T."/>
            <person name="Yamashita H."/>
            <person name="Murakawa K."/>
            <person name="Fujimori K."/>
            <person name="Tanai H."/>
            <person name="Kimata M."/>
            <person name="Watanabe M."/>
            <person name="Hiraoka S."/>
            <person name="Chiba Y."/>
            <person name="Ishida S."/>
            <person name="Ono Y."/>
            <person name="Takiguchi S."/>
            <person name="Watanabe S."/>
            <person name="Yosida M."/>
            <person name="Hotuta T."/>
            <person name="Kusano J."/>
            <person name="Kanehori K."/>
            <person name="Takahashi-Fujii A."/>
            <person name="Hara H."/>
            <person name="Tanase T.-O."/>
            <person name="Nomura Y."/>
            <person name="Togiya S."/>
            <person name="Komai F."/>
            <person name="Hara R."/>
            <person name="Takeuchi K."/>
            <person name="Arita M."/>
            <person name="Imose N."/>
            <person name="Musashino K."/>
            <person name="Yuuki H."/>
            <person name="Oshima A."/>
            <person name="Sasaki N."/>
            <person name="Aotsuka S."/>
            <person name="Yoshikawa Y."/>
            <person name="Matsunawa H."/>
            <person name="Ichihara T."/>
            <person name="Shiohata N."/>
            <person name="Sano S."/>
            <person name="Moriya S."/>
            <person name="Momiyama H."/>
            <person name="Satoh N."/>
            <person name="Takami S."/>
            <person name="Terashima Y."/>
            <person name="Suzuki O."/>
            <person name="Nakagawa S."/>
            <person name="Senoh A."/>
            <person name="Mizoguchi H."/>
            <person name="Goto Y."/>
            <person name="Shimizu F."/>
            <person name="Wakebe H."/>
            <person name="Hishigaki H."/>
            <person name="Watanabe T."/>
            <person name="Sugiyama A."/>
            <person name="Takemoto M."/>
            <person name="Kawakami B."/>
            <person name="Yamazaki M."/>
            <person name="Watanabe K."/>
            <person name="Kumagai A."/>
            <person name="Itakura S."/>
            <person name="Fukuzumi Y."/>
            <person name="Fujimori Y."/>
            <person name="Komiyama M."/>
            <person name="Tashiro H."/>
            <person name="Tanigami A."/>
            <person name="Fujiwara T."/>
            <person name="Ono T."/>
            <person name="Yamada K."/>
            <person name="Fujii Y."/>
            <person name="Ozaki K."/>
            <person name="Hirao M."/>
            <person name="Ohmori Y."/>
            <person name="Kawabata A."/>
            <person name="Hikiji T."/>
            <person name="Kobatake N."/>
            <person name="Inagaki H."/>
            <person name="Ikema Y."/>
            <person name="Okamoto S."/>
            <person name="Okitani R."/>
            <person name="Kawakami T."/>
            <person name="Noguchi S."/>
            <person name="Itoh T."/>
            <person name="Shigeta K."/>
            <person name="Senba T."/>
            <person name="Matsumura K."/>
            <person name="Nakajima Y."/>
            <person name="Mizuno T."/>
            <person name="Morinaga M."/>
            <person name="Sasaki M."/>
            <person name="Togashi T."/>
            <person name="Oyama M."/>
            <person name="Hata H."/>
            <person name="Watanabe M."/>
            <person name="Komatsu T."/>
            <person name="Mizushima-Sugano J."/>
            <person name="Satoh T."/>
            <person name="Shirai Y."/>
            <person name="Takahashi Y."/>
            <person name="Nakagawa K."/>
            <person name="Okumura K."/>
            <person name="Nagase T."/>
            <person name="Nomura N."/>
            <person name="Kikuchi H."/>
            <person name="Masuho Y."/>
            <person name="Yamashita R."/>
            <person name="Nakai K."/>
            <person name="Yada T."/>
            <person name="Nakamura Y."/>
            <person name="Ohara O."/>
            <person name="Isogai T."/>
            <person name="Sugano S."/>
        </authorList>
    </citation>
    <scope>NUCLEOTIDE SEQUENCE [LARGE SCALE MRNA] (ISOFORM 2)</scope>
</reference>
<reference key="5">
    <citation type="journal article" date="2006" name="Nature">
        <title>DNA sequence and analysis of human chromosome 8.</title>
        <authorList>
            <person name="Nusbaum C."/>
            <person name="Mikkelsen T.S."/>
            <person name="Zody M.C."/>
            <person name="Asakawa S."/>
            <person name="Taudien S."/>
            <person name="Garber M."/>
            <person name="Kodira C.D."/>
            <person name="Schueler M.G."/>
            <person name="Shimizu A."/>
            <person name="Whittaker C.A."/>
            <person name="Chang J.L."/>
            <person name="Cuomo C.A."/>
            <person name="Dewar K."/>
            <person name="FitzGerald M.G."/>
            <person name="Yang X."/>
            <person name="Allen N.R."/>
            <person name="Anderson S."/>
            <person name="Asakawa T."/>
            <person name="Blechschmidt K."/>
            <person name="Bloom T."/>
            <person name="Borowsky M.L."/>
            <person name="Butler J."/>
            <person name="Cook A."/>
            <person name="Corum B."/>
            <person name="DeArellano K."/>
            <person name="DeCaprio D."/>
            <person name="Dooley K.T."/>
            <person name="Dorris L. III"/>
            <person name="Engels R."/>
            <person name="Gloeckner G."/>
            <person name="Hafez N."/>
            <person name="Hagopian D.S."/>
            <person name="Hall J.L."/>
            <person name="Ishikawa S.K."/>
            <person name="Jaffe D.B."/>
            <person name="Kamat A."/>
            <person name="Kudoh J."/>
            <person name="Lehmann R."/>
            <person name="Lokitsang T."/>
            <person name="Macdonald P."/>
            <person name="Major J.E."/>
            <person name="Matthews C.D."/>
            <person name="Mauceli E."/>
            <person name="Menzel U."/>
            <person name="Mihalev A.H."/>
            <person name="Minoshima S."/>
            <person name="Murayama Y."/>
            <person name="Naylor J.W."/>
            <person name="Nicol R."/>
            <person name="Nguyen C."/>
            <person name="O'Leary S.B."/>
            <person name="O'Neill K."/>
            <person name="Parker S.C.J."/>
            <person name="Polley A."/>
            <person name="Raymond C.K."/>
            <person name="Reichwald K."/>
            <person name="Rodriguez J."/>
            <person name="Sasaki T."/>
            <person name="Schilhabel M."/>
            <person name="Siddiqui R."/>
            <person name="Smith C.L."/>
            <person name="Sneddon T.P."/>
            <person name="Talamas J.A."/>
            <person name="Tenzin P."/>
            <person name="Topham K."/>
            <person name="Venkataraman V."/>
            <person name="Wen G."/>
            <person name="Yamazaki S."/>
            <person name="Young S.K."/>
            <person name="Zeng Q."/>
            <person name="Zimmer A.R."/>
            <person name="Rosenthal A."/>
            <person name="Birren B.W."/>
            <person name="Platzer M."/>
            <person name="Shimizu N."/>
            <person name="Lander E.S."/>
        </authorList>
    </citation>
    <scope>NUCLEOTIDE SEQUENCE [LARGE SCALE GENOMIC DNA]</scope>
</reference>
<reference key="6">
    <citation type="journal article" date="2004" name="Genome Res.">
        <title>The status, quality, and expansion of the NIH full-length cDNA project: the Mammalian Gene Collection (MGC).</title>
        <authorList>
            <consortium name="The MGC Project Team"/>
        </authorList>
    </citation>
    <scope>NUCLEOTIDE SEQUENCE [LARGE SCALE MRNA] (ISOFORM 1)</scope>
    <source>
        <tissue>Colon</tissue>
        <tissue>Kidney</tissue>
        <tissue>Stomach</tissue>
    </source>
</reference>
<reference key="7">
    <citation type="journal article" date="1998" name="Endocrinology">
        <title>Comparative analysis of mammalian stanniocalcin genes.</title>
        <authorList>
            <person name="Varghese R."/>
            <person name="Wong C.K."/>
            <person name="Deol H."/>
            <person name="Wagner G.F."/>
            <person name="DiMattia G.E."/>
        </authorList>
    </citation>
    <scope>NUCLEOTIDE SEQUENCE [GENOMIC DNA] OF 1-157</scope>
</reference>
<reference key="8">
    <citation type="journal article" date="2004" name="Protein Sci.">
        <title>Signal peptide prediction based on analysis of experimentally verified cleavage sites.</title>
        <authorList>
            <person name="Zhang Z."/>
            <person name="Henzel W.J."/>
        </authorList>
    </citation>
    <scope>PROTEIN SEQUENCE OF 18-32</scope>
</reference>
<sequence>MLQNSAVLLVLVISASATHEAEQNDSVSPRKSRVAAQNSAEVVRCLNSALQVGCGAFACLENSTCDTDGMYDICKSFLYSAAKFDTQGKAFVKESLKCIANGVTSKVFLAIRRCSTFQRMIAEVQEECYSKLNVCSIAKRNPEAITEVVQLPNHFSNRYYNRLVRSLLECDEDTVSTIRDSLMEKIGPNMASLFHILQTDHCAQTHPRADFNRRRTNEPQKLKVLLRNLRGEEDSPSHIKRTSHESA</sequence>
<organism>
    <name type="scientific">Homo sapiens</name>
    <name type="common">Human</name>
    <dbReference type="NCBI Taxonomy" id="9606"/>
    <lineage>
        <taxon>Eukaryota</taxon>
        <taxon>Metazoa</taxon>
        <taxon>Chordata</taxon>
        <taxon>Craniata</taxon>
        <taxon>Vertebrata</taxon>
        <taxon>Euteleostomi</taxon>
        <taxon>Mammalia</taxon>
        <taxon>Eutheria</taxon>
        <taxon>Euarchontoglires</taxon>
        <taxon>Primates</taxon>
        <taxon>Haplorrhini</taxon>
        <taxon>Catarrhini</taxon>
        <taxon>Hominidae</taxon>
        <taxon>Homo</taxon>
    </lineage>
</organism>
<evidence type="ECO:0000250" key="1"/>
<evidence type="ECO:0000255" key="2"/>
<evidence type="ECO:0000269" key="3">
    <source>
    </source>
</evidence>
<evidence type="ECO:0000303" key="4">
    <source>
    </source>
</evidence>
<evidence type="ECO:0000305" key="5"/>
<gene>
    <name type="primary">STC1</name>
    <name type="synonym">STC</name>
</gene>
<accession>P52823</accession>
<accession>B4DN22</accession>
<accession>Q71UE5</accession>
<keyword id="KW-0025">Alternative splicing</keyword>
<keyword id="KW-0903">Direct protein sequencing</keyword>
<keyword id="KW-1015">Disulfide bond</keyword>
<keyword id="KW-0325">Glycoprotein</keyword>
<keyword id="KW-0372">Hormone</keyword>
<keyword id="KW-1267">Proteomics identification</keyword>
<keyword id="KW-1185">Reference proteome</keyword>
<keyword id="KW-0964">Secreted</keyword>
<keyword id="KW-0732">Signal</keyword>
<proteinExistence type="evidence at protein level"/>
<name>STC1_HUMAN</name>
<protein>
    <recommendedName>
        <fullName>Stanniocalcin-1</fullName>
        <shortName>STC-1</shortName>
    </recommendedName>
</protein>
<feature type="signal peptide" evidence="3">
    <location>
        <begin position="1"/>
        <end position="17"/>
    </location>
</feature>
<feature type="propeptide" id="PRO_0000033297" evidence="2">
    <location>
        <begin position="18"/>
        <end position="33"/>
    </location>
</feature>
<feature type="chain" id="PRO_0000033298" description="Stanniocalcin-1">
    <location>
        <begin position="34"/>
        <end position="247"/>
    </location>
</feature>
<feature type="glycosylation site" description="N-linked (GlcNAc...) asparagine" evidence="2">
    <location>
        <position position="62"/>
    </location>
</feature>
<feature type="disulfide bond" evidence="1">
    <location>
        <begin position="45"/>
        <end position="59"/>
    </location>
</feature>
<feature type="disulfide bond" evidence="1">
    <location>
        <begin position="54"/>
        <end position="74"/>
    </location>
</feature>
<feature type="disulfide bond" evidence="1">
    <location>
        <begin position="65"/>
        <end position="114"/>
    </location>
</feature>
<feature type="disulfide bond" evidence="1">
    <location>
        <begin position="98"/>
        <end position="128"/>
    </location>
</feature>
<feature type="disulfide bond" evidence="1">
    <location>
        <begin position="135"/>
        <end position="170"/>
    </location>
</feature>
<feature type="disulfide bond" description="Interchain" evidence="1">
    <location>
        <position position="202"/>
    </location>
</feature>
<feature type="splice variant" id="VSP_057169" description="In isoform 2." evidence="4">
    <location>
        <begin position="1"/>
        <end position="69"/>
    </location>
</feature>
<comment type="function">
    <text>Stimulates renal phosphate reabsorption, and could therefore prevent hypercalcemia.</text>
</comment>
<comment type="subunit">
    <text evidence="1">Homodimer; disulfide-linked.</text>
</comment>
<comment type="interaction">
    <interactant intactId="EBI-12268818">
        <id>P52823</id>
    </interactant>
    <interactant intactId="EBI-16439278">
        <id>Q6FHY5</id>
        <label>MEOX2</label>
    </interactant>
    <organismsDiffer>false</organismsDiffer>
    <experiments>3</experiments>
</comment>
<comment type="interaction">
    <interactant intactId="EBI-12268818">
        <id>P52823</id>
    </interactant>
    <interactant intactId="EBI-12268818">
        <id>P52823</id>
        <label>STC1</label>
    </interactant>
    <organismsDiffer>false</organismsDiffer>
    <experiments>2</experiments>
</comment>
<comment type="subcellular location">
    <subcellularLocation>
        <location>Secreted</location>
    </subcellularLocation>
</comment>
<comment type="alternative products">
    <event type="alternative splicing"/>
    <isoform>
        <id>P52823-1</id>
        <name>1</name>
        <sequence type="displayed"/>
    </isoform>
    <isoform>
        <id>P52823-2</id>
        <name>2</name>
        <sequence type="described" ref="VSP_057169"/>
    </isoform>
</comment>
<comment type="tissue specificity">
    <text>Expressed in most tissues, with the highest levels in ovary, prostate, heart, kidney and thyroid. In the kidney, expression is confined to the nephron, specifically in the distal convoluted tubule and in the collecting tubule. Not detected in the brain, liver, spleen, peripheral blood leukocytes and adrenal medulla.</text>
</comment>
<comment type="similarity">
    <text evidence="5">Belongs to the stanniocalcin family.</text>
</comment>
<dbReference type="EMBL" id="U25997">
    <property type="protein sequence ID" value="AAC09472.1"/>
    <property type="molecule type" value="mRNA"/>
</dbReference>
<dbReference type="EMBL" id="U46768">
    <property type="protein sequence ID" value="AAA88903.1"/>
    <property type="molecule type" value="mRNA"/>
</dbReference>
<dbReference type="EMBL" id="AF242179">
    <property type="protein sequence ID" value="AAL79522.1"/>
    <property type="molecule type" value="Genomic_DNA"/>
</dbReference>
<dbReference type="EMBL" id="AK297734">
    <property type="protein sequence ID" value="BAG60084.1"/>
    <property type="molecule type" value="mRNA"/>
</dbReference>
<dbReference type="EMBL" id="AC012119">
    <property type="status" value="NOT_ANNOTATED_CDS"/>
    <property type="molecule type" value="Genomic_DNA"/>
</dbReference>
<dbReference type="EMBL" id="BC029044">
    <property type="protein sequence ID" value="AAH29044.1"/>
    <property type="molecule type" value="mRNA"/>
</dbReference>
<dbReference type="EMBL" id="AF098463">
    <property type="protein sequence ID" value="AAC97949.1"/>
    <property type="molecule type" value="Genomic_DNA"/>
</dbReference>
<dbReference type="CCDS" id="CCDS6043.1">
    <molecule id="P52823-1"/>
</dbReference>
<dbReference type="RefSeq" id="NP_003146.1">
    <molecule id="P52823-1"/>
    <property type="nucleotide sequence ID" value="NM_003155.3"/>
</dbReference>
<dbReference type="SMR" id="P52823"/>
<dbReference type="BioGRID" id="112658">
    <property type="interactions" value="4"/>
</dbReference>
<dbReference type="FunCoup" id="P52823">
    <property type="interactions" value="579"/>
</dbReference>
<dbReference type="IntAct" id="P52823">
    <property type="interactions" value="2"/>
</dbReference>
<dbReference type="STRING" id="9606.ENSP00000290271"/>
<dbReference type="BindingDB" id="P52823"/>
<dbReference type="GlyCosmos" id="P52823">
    <property type="glycosylation" value="1 site, No reported glycans"/>
</dbReference>
<dbReference type="GlyGen" id="P52823">
    <property type="glycosylation" value="4 sites, 1 O-linked glycan (3 sites)"/>
</dbReference>
<dbReference type="iPTMnet" id="P52823"/>
<dbReference type="PhosphoSitePlus" id="P52823"/>
<dbReference type="BioMuta" id="STC1"/>
<dbReference type="DMDM" id="1706175"/>
<dbReference type="jPOST" id="P52823"/>
<dbReference type="MassIVE" id="P52823"/>
<dbReference type="PaxDb" id="9606-ENSP00000290271"/>
<dbReference type="PeptideAtlas" id="P52823"/>
<dbReference type="ProteomicsDB" id="4664"/>
<dbReference type="ProteomicsDB" id="56541">
    <molecule id="P52823-1"/>
</dbReference>
<dbReference type="Antibodypedia" id="9801">
    <property type="antibodies" value="403 antibodies from 37 providers"/>
</dbReference>
<dbReference type="DNASU" id="6781"/>
<dbReference type="Ensembl" id="ENST00000290271.7">
    <molecule id="P52823-1"/>
    <property type="protein sequence ID" value="ENSP00000290271.2"/>
    <property type="gene ID" value="ENSG00000159167.12"/>
</dbReference>
<dbReference type="Ensembl" id="ENST00000524323.1">
    <molecule id="P52823-2"/>
    <property type="protein sequence ID" value="ENSP00000427932.1"/>
    <property type="gene ID" value="ENSG00000159167.12"/>
</dbReference>
<dbReference type="GeneID" id="6781"/>
<dbReference type="KEGG" id="hsa:6781"/>
<dbReference type="MANE-Select" id="ENST00000290271.7">
    <property type="protein sequence ID" value="ENSP00000290271.2"/>
    <property type="RefSeq nucleotide sequence ID" value="NM_003155.3"/>
    <property type="RefSeq protein sequence ID" value="NP_003146.1"/>
</dbReference>
<dbReference type="UCSC" id="uc003xdw.2">
    <molecule id="P52823-1"/>
    <property type="organism name" value="human"/>
</dbReference>
<dbReference type="AGR" id="HGNC:11373"/>
<dbReference type="CTD" id="6781"/>
<dbReference type="DisGeNET" id="6781"/>
<dbReference type="GeneCards" id="STC1"/>
<dbReference type="HGNC" id="HGNC:11373">
    <property type="gene designation" value="STC1"/>
</dbReference>
<dbReference type="HPA" id="ENSG00000159167">
    <property type="expression patterns" value="Low tissue specificity"/>
</dbReference>
<dbReference type="MIM" id="601185">
    <property type="type" value="gene"/>
</dbReference>
<dbReference type="neXtProt" id="NX_P52823"/>
<dbReference type="OpenTargets" id="ENSG00000159167"/>
<dbReference type="PharmGKB" id="PA36190"/>
<dbReference type="VEuPathDB" id="HostDB:ENSG00000159167"/>
<dbReference type="eggNOG" id="ENOG502QU7E">
    <property type="taxonomic scope" value="Eukaryota"/>
</dbReference>
<dbReference type="GeneTree" id="ENSGT00390000005989"/>
<dbReference type="HOGENOM" id="CLU_064102_1_1_1"/>
<dbReference type="InParanoid" id="P52823"/>
<dbReference type="OMA" id="MCSIAKR"/>
<dbReference type="OrthoDB" id="10025265at2759"/>
<dbReference type="PAN-GO" id="P52823">
    <property type="GO annotations" value="2 GO annotations based on evolutionary models"/>
</dbReference>
<dbReference type="PhylomeDB" id="P52823"/>
<dbReference type="TreeFam" id="TF324693"/>
<dbReference type="PathwayCommons" id="P52823"/>
<dbReference type="SignaLink" id="P52823"/>
<dbReference type="BioGRID-ORCS" id="6781">
    <property type="hits" value="11 hits in 1151 CRISPR screens"/>
</dbReference>
<dbReference type="ChiTaRS" id="STC1">
    <property type="organism name" value="human"/>
</dbReference>
<dbReference type="GeneWiki" id="STC1"/>
<dbReference type="GenomeRNAi" id="6781"/>
<dbReference type="Pharos" id="P52823">
    <property type="development level" value="Tchem"/>
</dbReference>
<dbReference type="PRO" id="PR:P52823"/>
<dbReference type="Proteomes" id="UP000005640">
    <property type="component" value="Chromosome 8"/>
</dbReference>
<dbReference type="RNAct" id="P52823">
    <property type="molecule type" value="protein"/>
</dbReference>
<dbReference type="Bgee" id="ENSG00000159167">
    <property type="expression patterns" value="Expressed in pericardium and 157 other cell types or tissues"/>
</dbReference>
<dbReference type="ExpressionAtlas" id="P52823">
    <property type="expression patterns" value="baseline and differential"/>
</dbReference>
<dbReference type="GO" id="GO:0016324">
    <property type="term" value="C:apical plasma membrane"/>
    <property type="evidence" value="ECO:0007669"/>
    <property type="project" value="Ensembl"/>
</dbReference>
<dbReference type="GO" id="GO:0005737">
    <property type="term" value="C:cytoplasm"/>
    <property type="evidence" value="ECO:0000314"/>
    <property type="project" value="UniProtKB"/>
</dbReference>
<dbReference type="GO" id="GO:0005615">
    <property type="term" value="C:extracellular space"/>
    <property type="evidence" value="ECO:0000318"/>
    <property type="project" value="GO_Central"/>
</dbReference>
<dbReference type="GO" id="GO:0005634">
    <property type="term" value="C:nucleus"/>
    <property type="evidence" value="ECO:0000314"/>
    <property type="project" value="UniProtKB"/>
</dbReference>
<dbReference type="GO" id="GO:0005179">
    <property type="term" value="F:hormone activity"/>
    <property type="evidence" value="ECO:0007669"/>
    <property type="project" value="UniProtKB-KW"/>
</dbReference>
<dbReference type="GO" id="GO:0042802">
    <property type="term" value="F:identical protein binding"/>
    <property type="evidence" value="ECO:0000353"/>
    <property type="project" value="IntAct"/>
</dbReference>
<dbReference type="GO" id="GO:0060348">
    <property type="term" value="P:bone development"/>
    <property type="evidence" value="ECO:0000314"/>
    <property type="project" value="UniProtKB"/>
</dbReference>
<dbReference type="GO" id="GO:0071320">
    <property type="term" value="P:cellular response to cAMP"/>
    <property type="evidence" value="ECO:0007669"/>
    <property type="project" value="Ensembl"/>
</dbReference>
<dbReference type="GO" id="GO:0071385">
    <property type="term" value="P:cellular response to glucocorticoid stimulus"/>
    <property type="evidence" value="ECO:0007669"/>
    <property type="project" value="Ensembl"/>
</dbReference>
<dbReference type="GO" id="GO:0071456">
    <property type="term" value="P:cellular response to hypoxia"/>
    <property type="evidence" value="ECO:0007669"/>
    <property type="project" value="Ensembl"/>
</dbReference>
<dbReference type="GO" id="GO:0035988">
    <property type="term" value="P:chondrocyte proliferation"/>
    <property type="evidence" value="ECO:0000314"/>
    <property type="project" value="UniProtKB"/>
</dbReference>
<dbReference type="GO" id="GO:0046697">
    <property type="term" value="P:decidualization"/>
    <property type="evidence" value="ECO:0007669"/>
    <property type="project" value="Ensembl"/>
</dbReference>
<dbReference type="GO" id="GO:0007566">
    <property type="term" value="P:embryo implantation"/>
    <property type="evidence" value="ECO:0007669"/>
    <property type="project" value="Ensembl"/>
</dbReference>
<dbReference type="GO" id="GO:0001886">
    <property type="term" value="P:endothelial cell morphogenesis"/>
    <property type="evidence" value="ECO:0000314"/>
    <property type="project" value="UniProtKB"/>
</dbReference>
<dbReference type="GO" id="GO:0003421">
    <property type="term" value="P:growth plate cartilage axis specification"/>
    <property type="evidence" value="ECO:0000314"/>
    <property type="project" value="UniProtKB"/>
</dbReference>
<dbReference type="GO" id="GO:0006874">
    <property type="term" value="P:intracellular calcium ion homeostasis"/>
    <property type="evidence" value="ECO:0000314"/>
    <property type="project" value="UniProtKB"/>
</dbReference>
<dbReference type="GO" id="GO:0051926">
    <property type="term" value="P:negative regulation of calcium ion transport"/>
    <property type="evidence" value="ECO:0000314"/>
    <property type="project" value="UniProtKB"/>
</dbReference>
<dbReference type="GO" id="GO:0030336">
    <property type="term" value="P:negative regulation of cell migration"/>
    <property type="evidence" value="ECO:0000314"/>
    <property type="project" value="UniProtKB"/>
</dbReference>
<dbReference type="GO" id="GO:0010596">
    <property type="term" value="P:negative regulation of endothelial cell migration"/>
    <property type="evidence" value="ECO:0000314"/>
    <property type="project" value="UniProtKB"/>
</dbReference>
<dbReference type="GO" id="GO:1903403">
    <property type="term" value="P:negative regulation of renal phosphate excretion"/>
    <property type="evidence" value="ECO:0000314"/>
    <property type="project" value="UniProtKB"/>
</dbReference>
<dbReference type="GO" id="GO:0001503">
    <property type="term" value="P:ossification"/>
    <property type="evidence" value="ECO:0007669"/>
    <property type="project" value="Ensembl"/>
</dbReference>
<dbReference type="GO" id="GO:0090280">
    <property type="term" value="P:positive regulation of calcium ion import"/>
    <property type="evidence" value="ECO:0000314"/>
    <property type="project" value="UniProtKB"/>
</dbReference>
<dbReference type="GO" id="GO:0086004">
    <property type="term" value="P:regulation of cardiac muscle cell contraction"/>
    <property type="evidence" value="ECO:0000314"/>
    <property type="project" value="UniProtKB"/>
</dbReference>
<dbReference type="GO" id="GO:0044070">
    <property type="term" value="P:regulation of monoatomic anion transport"/>
    <property type="evidence" value="ECO:0000314"/>
    <property type="project" value="UniProtKB"/>
</dbReference>
<dbReference type="GO" id="GO:0033280">
    <property type="term" value="P:response to vitamin D"/>
    <property type="evidence" value="ECO:0007669"/>
    <property type="project" value="Ensembl"/>
</dbReference>
<dbReference type="InterPro" id="IPR004978">
    <property type="entry name" value="Stanniocalcin"/>
</dbReference>
<dbReference type="PANTHER" id="PTHR11245">
    <property type="entry name" value="STANNIOCALCIN"/>
    <property type="match status" value="1"/>
</dbReference>
<dbReference type="PANTHER" id="PTHR11245:SF1">
    <property type="entry name" value="STANNIOCALCIN-1"/>
    <property type="match status" value="1"/>
</dbReference>
<dbReference type="Pfam" id="PF03298">
    <property type="entry name" value="Stanniocalcin"/>
    <property type="match status" value="1"/>
</dbReference>